<name>ACSF_PROMP</name>
<gene>
    <name evidence="1" type="primary">acsF</name>
    <name type="ordered locus">PMM0844</name>
</gene>
<reference key="1">
    <citation type="journal article" date="2003" name="Nature">
        <title>Genome divergence in two Prochlorococcus ecotypes reflects oceanic niche differentiation.</title>
        <authorList>
            <person name="Rocap G."/>
            <person name="Larimer F.W."/>
            <person name="Lamerdin J.E."/>
            <person name="Malfatti S."/>
            <person name="Chain P."/>
            <person name="Ahlgren N.A."/>
            <person name="Arellano A."/>
            <person name="Coleman M."/>
            <person name="Hauser L."/>
            <person name="Hess W.R."/>
            <person name="Johnson Z.I."/>
            <person name="Land M.L."/>
            <person name="Lindell D."/>
            <person name="Post A.F."/>
            <person name="Regala W."/>
            <person name="Shah M."/>
            <person name="Shaw S.L."/>
            <person name="Steglich C."/>
            <person name="Sullivan M.B."/>
            <person name="Ting C.S."/>
            <person name="Tolonen A."/>
            <person name="Webb E.A."/>
            <person name="Zinser E.R."/>
            <person name="Chisholm S.W."/>
        </authorList>
    </citation>
    <scope>NUCLEOTIDE SEQUENCE [LARGE SCALE GENOMIC DNA]</scope>
    <source>
        <strain>CCMP1986 / NIES-2087 / MED4</strain>
    </source>
</reference>
<keyword id="KW-0149">Chlorophyll biosynthesis</keyword>
<keyword id="KW-0408">Iron</keyword>
<keyword id="KW-0479">Metal-binding</keyword>
<keyword id="KW-0521">NADP</keyword>
<keyword id="KW-0560">Oxidoreductase</keyword>
<keyword id="KW-0602">Photosynthesis</keyword>
<dbReference type="EC" id="1.14.13.81" evidence="1"/>
<dbReference type="EMBL" id="BX548174">
    <property type="protein sequence ID" value="CAE19303.1"/>
    <property type="molecule type" value="Genomic_DNA"/>
</dbReference>
<dbReference type="RefSeq" id="WP_011132478.1">
    <property type="nucleotide sequence ID" value="NC_005072.1"/>
</dbReference>
<dbReference type="STRING" id="59919.PMM0844"/>
<dbReference type="KEGG" id="pmm:PMM0844"/>
<dbReference type="eggNOG" id="COG1633">
    <property type="taxonomic scope" value="Bacteria"/>
</dbReference>
<dbReference type="HOGENOM" id="CLU_048037_0_0_3"/>
<dbReference type="OrthoDB" id="141643at2"/>
<dbReference type="UniPathway" id="UPA00670"/>
<dbReference type="Proteomes" id="UP000001026">
    <property type="component" value="Chromosome"/>
</dbReference>
<dbReference type="GO" id="GO:0005506">
    <property type="term" value="F:iron ion binding"/>
    <property type="evidence" value="ECO:0007669"/>
    <property type="project" value="UniProtKB-UniRule"/>
</dbReference>
<dbReference type="GO" id="GO:0048529">
    <property type="term" value="F:magnesium-protoporphyrin IX monomethyl ester (oxidative) cyclase activity"/>
    <property type="evidence" value="ECO:0007669"/>
    <property type="project" value="UniProtKB-UniRule"/>
</dbReference>
<dbReference type="GO" id="GO:0036068">
    <property type="term" value="P:light-independent chlorophyll biosynthetic process"/>
    <property type="evidence" value="ECO:0007669"/>
    <property type="project" value="UniProtKB-UniRule"/>
</dbReference>
<dbReference type="GO" id="GO:0015979">
    <property type="term" value="P:photosynthesis"/>
    <property type="evidence" value="ECO:0007669"/>
    <property type="project" value="UniProtKB-UniRule"/>
</dbReference>
<dbReference type="Gene3D" id="1.20.1260.10">
    <property type="match status" value="1"/>
</dbReference>
<dbReference type="HAMAP" id="MF_01840">
    <property type="entry name" value="AcsF"/>
    <property type="match status" value="1"/>
</dbReference>
<dbReference type="InterPro" id="IPR008434">
    <property type="entry name" value="AcsF"/>
</dbReference>
<dbReference type="InterPro" id="IPR012347">
    <property type="entry name" value="Ferritin-like"/>
</dbReference>
<dbReference type="InterPro" id="IPR009078">
    <property type="entry name" value="Ferritin-like_SF"/>
</dbReference>
<dbReference type="InterPro" id="IPR003251">
    <property type="entry name" value="Rr_diiron-bd_dom"/>
</dbReference>
<dbReference type="NCBIfam" id="TIGR02029">
    <property type="entry name" value="AcsF"/>
    <property type="match status" value="1"/>
</dbReference>
<dbReference type="NCBIfam" id="NF010172">
    <property type="entry name" value="PRK13654.1"/>
    <property type="match status" value="1"/>
</dbReference>
<dbReference type="PANTHER" id="PTHR31053">
    <property type="entry name" value="MAGNESIUM-PROTOPORPHYRIN IX MONOMETHYL ESTER [OXIDATIVE] CYCLASE, CHLOROPLASTIC"/>
    <property type="match status" value="1"/>
</dbReference>
<dbReference type="PANTHER" id="PTHR31053:SF2">
    <property type="entry name" value="MAGNESIUM-PROTOPORPHYRIN IX MONOMETHYL ESTER [OXIDATIVE] CYCLASE, CHLOROPLASTIC"/>
    <property type="match status" value="1"/>
</dbReference>
<dbReference type="Pfam" id="PF02915">
    <property type="entry name" value="Rubrerythrin"/>
    <property type="match status" value="1"/>
</dbReference>
<dbReference type="SUPFAM" id="SSF47240">
    <property type="entry name" value="Ferritin-like"/>
    <property type="match status" value="1"/>
</dbReference>
<comment type="function">
    <text evidence="1">Catalyzes the formation of the isocyclic ring in chlorophyll biosynthesis. Mediates the cyclase reaction, which results in the formation of divinylprotochlorophyllide (Pchlide) characteristic of all chlorophylls from magnesium-protoporphyrin IX 13-monomethyl ester (MgPMME).</text>
</comment>
<comment type="catalytic activity">
    <reaction evidence="1">
        <text>Mg-protoporphyrin IX 13-monomethyl ester + 3 NADPH + 3 O2 + 2 H(+) = 3,8-divinyl protochlorophyllide a + 3 NADP(+) + 5 H2O</text>
        <dbReference type="Rhea" id="RHEA:33235"/>
        <dbReference type="ChEBI" id="CHEBI:15377"/>
        <dbReference type="ChEBI" id="CHEBI:15378"/>
        <dbReference type="ChEBI" id="CHEBI:15379"/>
        <dbReference type="ChEBI" id="CHEBI:57783"/>
        <dbReference type="ChEBI" id="CHEBI:58349"/>
        <dbReference type="ChEBI" id="CHEBI:58632"/>
        <dbReference type="ChEBI" id="CHEBI:60491"/>
        <dbReference type="EC" id="1.14.13.81"/>
    </reaction>
</comment>
<comment type="cofactor">
    <cofactor evidence="1">
        <name>Fe cation</name>
        <dbReference type="ChEBI" id="CHEBI:24875"/>
    </cofactor>
</comment>
<comment type="pathway">
    <text evidence="1">Porphyrin-containing compound metabolism; chlorophyll biosynthesis (light-independent).</text>
</comment>
<comment type="similarity">
    <text evidence="1">Belongs to the AcsF family.</text>
</comment>
<proteinExistence type="inferred from homology"/>
<sequence>MAQQTIESNNKKSVNRGKDIAKDTILTPNFYTTDFEAMEKMDLSINEDELEAICEEFRKDYNRHHFVRNKEFEGAADKIDAETRELFVDFLEGSCTSEFSGFLLYKELSKRIKDKNPLLAECFAHMARDEARHAGFLNKSMNDFGLQLDLGFLTANKDYTYFAPRAIFYATYISEKIGYWRYIAIYRHLEKNPSGKIFPLFNFFENWCQDENRHGDFFDALMKAQPRTVKSLSQKIEIFGYTLKHPIFDYYHRFRYFLNNHPIVSKLWSRFFLLAVFATMYIRDLGTKRNFYGALGLNAREYDQFVINKTNETSAKVFPVVLNVYDKSFYKRLDRIVENGTRLSEIDKKENPNVIKVLSKLPIFISNGYQLIRLYLLKPLESDDFQPSIR</sequence>
<evidence type="ECO:0000255" key="1">
    <source>
        <dbReference type="HAMAP-Rule" id="MF_01840"/>
    </source>
</evidence>
<accession>Q7V1M1</accession>
<protein>
    <recommendedName>
        <fullName evidence="1">Magnesium-protoporphyrin IX monomethyl ester [oxidative] cyclase</fullName>
        <shortName evidence="1">Mg-protoporphyrin IX monomethyl ester oxidative cyclase</shortName>
        <ecNumber evidence="1">1.14.13.81</ecNumber>
    </recommendedName>
</protein>
<feature type="chain" id="PRO_0000217532" description="Magnesium-protoporphyrin IX monomethyl ester [oxidative] cyclase">
    <location>
        <begin position="1"/>
        <end position="390"/>
    </location>
</feature>
<organism>
    <name type="scientific">Prochlorococcus marinus subsp. pastoris (strain CCMP1986 / NIES-2087 / MED4)</name>
    <dbReference type="NCBI Taxonomy" id="59919"/>
    <lineage>
        <taxon>Bacteria</taxon>
        <taxon>Bacillati</taxon>
        <taxon>Cyanobacteriota</taxon>
        <taxon>Cyanophyceae</taxon>
        <taxon>Synechococcales</taxon>
        <taxon>Prochlorococcaceae</taxon>
        <taxon>Prochlorococcus</taxon>
    </lineage>
</organism>